<keyword id="KW-0227">DNA damage</keyword>
<keyword id="KW-0234">DNA repair</keyword>
<keyword id="KW-0235">DNA replication</keyword>
<keyword id="KW-0436">Ligase</keyword>
<keyword id="KW-0460">Magnesium</keyword>
<keyword id="KW-0464">Manganese</keyword>
<keyword id="KW-0479">Metal-binding</keyword>
<keyword id="KW-0520">NAD</keyword>
<keyword id="KW-1185">Reference proteome</keyword>
<keyword id="KW-0862">Zinc</keyword>
<comment type="function">
    <text evidence="1">DNA ligase that catalyzes the formation of phosphodiester linkages between 5'-phosphoryl and 3'-hydroxyl groups in double-stranded DNA using NAD as a coenzyme and as the energy source for the reaction. It is essential for DNA replication and repair of damaged DNA.</text>
</comment>
<comment type="catalytic activity">
    <reaction evidence="1">
        <text>NAD(+) + (deoxyribonucleotide)n-3'-hydroxyl + 5'-phospho-(deoxyribonucleotide)m = (deoxyribonucleotide)n+m + AMP + beta-nicotinamide D-nucleotide.</text>
        <dbReference type="EC" id="6.5.1.2"/>
    </reaction>
</comment>
<comment type="cofactor">
    <cofactor evidence="1">
        <name>Mg(2+)</name>
        <dbReference type="ChEBI" id="CHEBI:18420"/>
    </cofactor>
    <cofactor evidence="1">
        <name>Mn(2+)</name>
        <dbReference type="ChEBI" id="CHEBI:29035"/>
    </cofactor>
</comment>
<comment type="similarity">
    <text evidence="1">Belongs to the NAD-dependent DNA ligase family. LigA subfamily.</text>
</comment>
<proteinExistence type="inferred from homology"/>
<organism>
    <name type="scientific">Thermomicrobium roseum (strain ATCC 27502 / DSM 5159 / P-2)</name>
    <dbReference type="NCBI Taxonomy" id="309801"/>
    <lineage>
        <taxon>Bacteria</taxon>
        <taxon>Pseudomonadati</taxon>
        <taxon>Thermomicrobiota</taxon>
        <taxon>Thermomicrobia</taxon>
        <taxon>Thermomicrobiales</taxon>
        <taxon>Thermomicrobiaceae</taxon>
        <taxon>Thermomicrobium</taxon>
    </lineage>
</organism>
<sequence>MAEQPALQADRVPPEVRARVEELRRLIQRYNYEYYVLNAPTVSDAEYDALMLELRRWEEQYPELVTPDSPTQRVGAPPAEGFATVQHEIPMLSLGNVFSDGEIRAWAERVYRLSGRQDVEFVTEPKVDGLAVSLLYRDGVLVRGATRGDGYTGEDVTNNVRTIRMIPLRLYPPEGVIVPPVLEVRGEVYMNVRDFERLNRERGEQGLPLFANPRNAAAGSLRQLDPSVTASRPLRFAAWDIGLWEGTEPPATHLATLEFLRQLQIPVVPDYRLCRSVDEVIAECHRWQERRDALEFEADGVVIKVNDRALYQALGVVGREPRGATAYKFPAHEKTTIVRDVIWSVGRTGKLTPVAVLEPVEIGGVIVERATLHNEEEIRRLGLLIGDAVVVQRRGDVIPKVVATIPQRRDGDERPVDIPRQCPVCGAHTIRLEGEVDRYCPNPNCPARLKASVRHFASRNAMDIEGLGEKISDLFVDLGIIRSLPDLYEIDWARVLQLEGFGPKKVENLRKAIEASKNRPFARFLFALGIRHVGERNAQLLADHFRSIDRLMEATIDELLQIPGFGPAVAQSVFEFFREPKNREMIERFRRLGVRMAEEEAAAVATVQGPLAGKTVVLTGRLETLTRSQAEELLRRAGAHVTDSVSRKTDYVFAGADPGSKYVRAQQLGVPILGEEDLLRMLRESGIEVEAAARS</sequence>
<evidence type="ECO:0000255" key="1">
    <source>
        <dbReference type="HAMAP-Rule" id="MF_01588"/>
    </source>
</evidence>
<dbReference type="EC" id="6.5.1.2" evidence="1"/>
<dbReference type="EMBL" id="CP001275">
    <property type="protein sequence ID" value="ACM05038.1"/>
    <property type="molecule type" value="Genomic_DNA"/>
</dbReference>
<dbReference type="RefSeq" id="WP_012641622.1">
    <property type="nucleotide sequence ID" value="NC_011959.1"/>
</dbReference>
<dbReference type="SMR" id="B9KXM2"/>
<dbReference type="STRING" id="309801.trd_0210"/>
<dbReference type="KEGG" id="tro:trd_0210"/>
<dbReference type="eggNOG" id="COG0272">
    <property type="taxonomic scope" value="Bacteria"/>
</dbReference>
<dbReference type="HOGENOM" id="CLU_007764_2_1_0"/>
<dbReference type="OrthoDB" id="9759736at2"/>
<dbReference type="Proteomes" id="UP000000447">
    <property type="component" value="Chromosome"/>
</dbReference>
<dbReference type="GO" id="GO:0005829">
    <property type="term" value="C:cytosol"/>
    <property type="evidence" value="ECO:0007669"/>
    <property type="project" value="TreeGrafter"/>
</dbReference>
<dbReference type="GO" id="GO:0003677">
    <property type="term" value="F:DNA binding"/>
    <property type="evidence" value="ECO:0007669"/>
    <property type="project" value="InterPro"/>
</dbReference>
<dbReference type="GO" id="GO:0003911">
    <property type="term" value="F:DNA ligase (NAD+) activity"/>
    <property type="evidence" value="ECO:0007669"/>
    <property type="project" value="UniProtKB-UniRule"/>
</dbReference>
<dbReference type="GO" id="GO:0046872">
    <property type="term" value="F:metal ion binding"/>
    <property type="evidence" value="ECO:0007669"/>
    <property type="project" value="UniProtKB-KW"/>
</dbReference>
<dbReference type="GO" id="GO:0006281">
    <property type="term" value="P:DNA repair"/>
    <property type="evidence" value="ECO:0007669"/>
    <property type="project" value="UniProtKB-KW"/>
</dbReference>
<dbReference type="GO" id="GO:0006260">
    <property type="term" value="P:DNA replication"/>
    <property type="evidence" value="ECO:0007669"/>
    <property type="project" value="UniProtKB-KW"/>
</dbReference>
<dbReference type="CDD" id="cd17748">
    <property type="entry name" value="BRCT_DNA_ligase_like"/>
    <property type="match status" value="1"/>
</dbReference>
<dbReference type="CDD" id="cd00114">
    <property type="entry name" value="LIGANc"/>
    <property type="match status" value="1"/>
</dbReference>
<dbReference type="FunFam" id="1.10.150.20:FF:000006">
    <property type="entry name" value="DNA ligase"/>
    <property type="match status" value="1"/>
</dbReference>
<dbReference type="FunFam" id="1.10.150.20:FF:000007">
    <property type="entry name" value="DNA ligase"/>
    <property type="match status" value="1"/>
</dbReference>
<dbReference type="FunFam" id="1.10.287.610:FF:000002">
    <property type="entry name" value="DNA ligase"/>
    <property type="match status" value="1"/>
</dbReference>
<dbReference type="FunFam" id="2.40.50.140:FF:000012">
    <property type="entry name" value="DNA ligase"/>
    <property type="match status" value="1"/>
</dbReference>
<dbReference type="FunFam" id="3.30.470.30:FF:000001">
    <property type="entry name" value="DNA ligase"/>
    <property type="match status" value="1"/>
</dbReference>
<dbReference type="Gene3D" id="6.20.10.30">
    <property type="match status" value="1"/>
</dbReference>
<dbReference type="Gene3D" id="1.10.150.20">
    <property type="entry name" value="5' to 3' exonuclease, C-terminal subdomain"/>
    <property type="match status" value="2"/>
</dbReference>
<dbReference type="Gene3D" id="3.40.50.10190">
    <property type="entry name" value="BRCT domain"/>
    <property type="match status" value="1"/>
</dbReference>
<dbReference type="Gene3D" id="3.30.470.30">
    <property type="entry name" value="DNA ligase/mRNA capping enzyme"/>
    <property type="match status" value="1"/>
</dbReference>
<dbReference type="Gene3D" id="1.10.287.610">
    <property type="entry name" value="Helix hairpin bin"/>
    <property type="match status" value="1"/>
</dbReference>
<dbReference type="Gene3D" id="2.40.50.140">
    <property type="entry name" value="Nucleic acid-binding proteins"/>
    <property type="match status" value="1"/>
</dbReference>
<dbReference type="HAMAP" id="MF_01588">
    <property type="entry name" value="DNA_ligase_A"/>
    <property type="match status" value="1"/>
</dbReference>
<dbReference type="InterPro" id="IPR001357">
    <property type="entry name" value="BRCT_dom"/>
</dbReference>
<dbReference type="InterPro" id="IPR036420">
    <property type="entry name" value="BRCT_dom_sf"/>
</dbReference>
<dbReference type="InterPro" id="IPR041663">
    <property type="entry name" value="DisA/LigA_HHH"/>
</dbReference>
<dbReference type="InterPro" id="IPR001679">
    <property type="entry name" value="DNA_ligase"/>
</dbReference>
<dbReference type="InterPro" id="IPR018239">
    <property type="entry name" value="DNA_ligase_AS"/>
</dbReference>
<dbReference type="InterPro" id="IPR033136">
    <property type="entry name" value="DNA_ligase_CS"/>
</dbReference>
<dbReference type="InterPro" id="IPR013839">
    <property type="entry name" value="DNAligase_adenylation"/>
</dbReference>
<dbReference type="InterPro" id="IPR013840">
    <property type="entry name" value="DNAligase_N"/>
</dbReference>
<dbReference type="InterPro" id="IPR003583">
    <property type="entry name" value="Hlx-hairpin-Hlx_DNA-bd_motif"/>
</dbReference>
<dbReference type="InterPro" id="IPR012340">
    <property type="entry name" value="NA-bd_OB-fold"/>
</dbReference>
<dbReference type="InterPro" id="IPR004150">
    <property type="entry name" value="NAD_DNA_ligase_OB"/>
</dbReference>
<dbReference type="InterPro" id="IPR010994">
    <property type="entry name" value="RuvA_2-like"/>
</dbReference>
<dbReference type="InterPro" id="IPR004149">
    <property type="entry name" value="Znf_DNAligase_C4"/>
</dbReference>
<dbReference type="NCBIfam" id="TIGR00575">
    <property type="entry name" value="dnlj"/>
    <property type="match status" value="1"/>
</dbReference>
<dbReference type="NCBIfam" id="NF005932">
    <property type="entry name" value="PRK07956.1"/>
    <property type="match status" value="1"/>
</dbReference>
<dbReference type="PANTHER" id="PTHR23389">
    <property type="entry name" value="CHROMOSOME TRANSMISSION FIDELITY FACTOR 18"/>
    <property type="match status" value="1"/>
</dbReference>
<dbReference type="PANTHER" id="PTHR23389:SF9">
    <property type="entry name" value="DNA LIGASE"/>
    <property type="match status" value="1"/>
</dbReference>
<dbReference type="Pfam" id="PF00533">
    <property type="entry name" value="BRCT"/>
    <property type="match status" value="1"/>
</dbReference>
<dbReference type="Pfam" id="PF01653">
    <property type="entry name" value="DNA_ligase_aden"/>
    <property type="match status" value="1"/>
</dbReference>
<dbReference type="Pfam" id="PF03120">
    <property type="entry name" value="DNA_ligase_OB"/>
    <property type="match status" value="1"/>
</dbReference>
<dbReference type="Pfam" id="PF03119">
    <property type="entry name" value="DNA_ligase_ZBD"/>
    <property type="match status" value="1"/>
</dbReference>
<dbReference type="Pfam" id="PF12826">
    <property type="entry name" value="HHH_2"/>
    <property type="match status" value="1"/>
</dbReference>
<dbReference type="Pfam" id="PF14520">
    <property type="entry name" value="HHH_5"/>
    <property type="match status" value="1"/>
</dbReference>
<dbReference type="Pfam" id="PF22745">
    <property type="entry name" value="Nlig-Ia"/>
    <property type="match status" value="1"/>
</dbReference>
<dbReference type="PIRSF" id="PIRSF001604">
    <property type="entry name" value="LigA"/>
    <property type="match status" value="1"/>
</dbReference>
<dbReference type="SMART" id="SM00292">
    <property type="entry name" value="BRCT"/>
    <property type="match status" value="1"/>
</dbReference>
<dbReference type="SMART" id="SM00278">
    <property type="entry name" value="HhH1"/>
    <property type="match status" value="4"/>
</dbReference>
<dbReference type="SMART" id="SM00532">
    <property type="entry name" value="LIGANc"/>
    <property type="match status" value="1"/>
</dbReference>
<dbReference type="SUPFAM" id="SSF52113">
    <property type="entry name" value="BRCT domain"/>
    <property type="match status" value="1"/>
</dbReference>
<dbReference type="SUPFAM" id="SSF56091">
    <property type="entry name" value="DNA ligase/mRNA capping enzyme, catalytic domain"/>
    <property type="match status" value="1"/>
</dbReference>
<dbReference type="SUPFAM" id="SSF50249">
    <property type="entry name" value="Nucleic acid-binding proteins"/>
    <property type="match status" value="1"/>
</dbReference>
<dbReference type="SUPFAM" id="SSF47781">
    <property type="entry name" value="RuvA domain 2-like"/>
    <property type="match status" value="1"/>
</dbReference>
<dbReference type="PROSITE" id="PS50172">
    <property type="entry name" value="BRCT"/>
    <property type="match status" value="1"/>
</dbReference>
<dbReference type="PROSITE" id="PS01055">
    <property type="entry name" value="DNA_LIGASE_N1"/>
    <property type="match status" value="1"/>
</dbReference>
<dbReference type="PROSITE" id="PS01056">
    <property type="entry name" value="DNA_LIGASE_N2"/>
    <property type="match status" value="1"/>
</dbReference>
<protein>
    <recommendedName>
        <fullName evidence="1">DNA ligase</fullName>
        <ecNumber evidence="1">6.5.1.2</ecNumber>
    </recommendedName>
    <alternativeName>
        <fullName evidence="1">Polydeoxyribonucleotide synthase [NAD(+)]</fullName>
    </alternativeName>
</protein>
<reference key="1">
    <citation type="journal article" date="2009" name="PLoS ONE">
        <title>Complete genome sequence of the aerobic CO-oxidizing thermophile Thermomicrobium roseum.</title>
        <authorList>
            <person name="Wu D."/>
            <person name="Raymond J."/>
            <person name="Wu M."/>
            <person name="Chatterji S."/>
            <person name="Ren Q."/>
            <person name="Graham J.E."/>
            <person name="Bryant D.A."/>
            <person name="Robb F."/>
            <person name="Colman A."/>
            <person name="Tallon L.J."/>
            <person name="Badger J.H."/>
            <person name="Madupu R."/>
            <person name="Ward N.L."/>
            <person name="Eisen J.A."/>
        </authorList>
    </citation>
    <scope>NUCLEOTIDE SEQUENCE [LARGE SCALE GENOMIC DNA]</scope>
    <source>
        <strain>ATCC 27502 / DSM 5159 / P-2</strain>
    </source>
</reference>
<name>DNLJ_THERP</name>
<feature type="chain" id="PRO_0000380496" description="DNA ligase">
    <location>
        <begin position="1"/>
        <end position="695"/>
    </location>
</feature>
<feature type="domain" description="BRCT" evidence="1">
    <location>
        <begin position="606"/>
        <end position="695"/>
    </location>
</feature>
<feature type="active site" description="N6-AMP-lysine intermediate" evidence="1">
    <location>
        <position position="126"/>
    </location>
</feature>
<feature type="binding site" evidence="1">
    <location>
        <begin position="44"/>
        <end position="48"/>
    </location>
    <ligand>
        <name>NAD(+)</name>
        <dbReference type="ChEBI" id="CHEBI:57540"/>
    </ligand>
</feature>
<feature type="binding site" evidence="1">
    <location>
        <begin position="93"/>
        <end position="94"/>
    </location>
    <ligand>
        <name>NAD(+)</name>
        <dbReference type="ChEBI" id="CHEBI:57540"/>
    </ligand>
</feature>
<feature type="binding site" evidence="1">
    <location>
        <position position="124"/>
    </location>
    <ligand>
        <name>NAD(+)</name>
        <dbReference type="ChEBI" id="CHEBI:57540"/>
    </ligand>
</feature>
<feature type="binding site" evidence="1">
    <location>
        <position position="147"/>
    </location>
    <ligand>
        <name>NAD(+)</name>
        <dbReference type="ChEBI" id="CHEBI:57540"/>
    </ligand>
</feature>
<feature type="binding site" evidence="1">
    <location>
        <position position="187"/>
    </location>
    <ligand>
        <name>NAD(+)</name>
        <dbReference type="ChEBI" id="CHEBI:57540"/>
    </ligand>
</feature>
<feature type="binding site" evidence="1">
    <location>
        <position position="304"/>
    </location>
    <ligand>
        <name>NAD(+)</name>
        <dbReference type="ChEBI" id="CHEBI:57540"/>
    </ligand>
</feature>
<feature type="binding site" evidence="1">
    <location>
        <position position="328"/>
    </location>
    <ligand>
        <name>NAD(+)</name>
        <dbReference type="ChEBI" id="CHEBI:57540"/>
    </ligand>
</feature>
<feature type="binding site" evidence="1">
    <location>
        <position position="422"/>
    </location>
    <ligand>
        <name>Zn(2+)</name>
        <dbReference type="ChEBI" id="CHEBI:29105"/>
    </ligand>
</feature>
<feature type="binding site" evidence="1">
    <location>
        <position position="425"/>
    </location>
    <ligand>
        <name>Zn(2+)</name>
        <dbReference type="ChEBI" id="CHEBI:29105"/>
    </ligand>
</feature>
<feature type="binding site" evidence="1">
    <location>
        <position position="440"/>
    </location>
    <ligand>
        <name>Zn(2+)</name>
        <dbReference type="ChEBI" id="CHEBI:29105"/>
    </ligand>
</feature>
<feature type="binding site" evidence="1">
    <location>
        <position position="445"/>
    </location>
    <ligand>
        <name>Zn(2+)</name>
        <dbReference type="ChEBI" id="CHEBI:29105"/>
    </ligand>
</feature>
<accession>B9KXM2</accession>
<gene>
    <name evidence="1" type="primary">ligA</name>
    <name type="ordered locus">trd_0210</name>
</gene>